<protein>
    <recommendedName>
        <fullName evidence="5">Histone acetyltransferase rtt109</fullName>
        <ecNumber evidence="1">2.3.1.48</ecNumber>
    </recommendedName>
</protein>
<accession>A0A364LXP7</accession>
<reference key="1">
    <citation type="submission" date="2018-07" db="EMBL/GenBank/DDBJ databases">
        <title>Identification of spontaneous genetic mutation associated with occurrence of a yellow conidial color mutant of Aspergillus flavus.</title>
        <authorList>
            <person name="Chang P.-K."/>
            <person name="Mack B.M."/>
            <person name="Scharfenstein L."/>
            <person name="Gilbert M.K."/>
        </authorList>
    </citation>
    <scope>NUCLEOTIDE SEQUENCE [LARGE SCALE GENOMIC DNA]</scope>
    <source>
        <strain>CA14</strain>
    </source>
</reference>
<reference evidence="7" key="2">
    <citation type="submission" date="2020-07" db="EMBL/GenBank/DDBJ databases">
        <title>Two New Chromosome-Level Aspergillus flavus Reference Genomes Reveal a Large Insertion Potentially Contributing to Isolate Stress Tolerance and Aflatoxin Production.</title>
        <authorList>
            <person name="Fountain J.C."/>
            <person name="Clevenger J.P."/>
            <person name="Nadon B."/>
            <person name="Youngblood R.C."/>
            <person name="Korani W."/>
            <person name="Chang P.-K."/>
            <person name="Starr D."/>
            <person name="Wang H."/>
            <person name="Isett B."/>
            <person name="Johnston H.R."/>
            <person name="Wiggins R."/>
            <person name="Chu Y."/>
            <person name="Agarwal G."/>
            <person name="Kemerait R.C."/>
            <person name="Pandey M.K."/>
            <person name="Bhatnagar D."/>
            <person name="Ozias-Akins P."/>
            <person name="Varshney R.K."/>
            <person name="Scheffler B.E."/>
            <person name="Vaughn J.N."/>
            <person name="Guo B."/>
        </authorList>
    </citation>
    <scope>NUCLEOTIDE SEQUENCE [LARGE SCALE GENOMIC DNA]</scope>
    <source>
        <strain evidence="7">AF13</strain>
    </source>
</reference>
<reference evidence="6" key="3">
    <citation type="journal article" date="2021" name="IMA Fungus">
        <title>The Fungi-specific histone Acetyltransferase Rtt109 mediates morphogenesis, Aflatoxin synthesis and pathogenicity in Aspergillus flavus by acetylating H3K9.</title>
        <authorList>
            <person name="Sun R."/>
            <person name="Wen M."/>
            <person name="Wu L."/>
            <person name="Lan H."/>
            <person name="Yuan J."/>
            <person name="Wang S."/>
        </authorList>
    </citation>
    <scope>FUNCTION</scope>
    <scope>CATALYTIC ACTIVITY</scope>
    <scope>SUBCELLULAR LOCATION</scope>
    <scope>DISRUPTION PHENOTYPE</scope>
    <source>
        <strain evidence="6">CA14</strain>
    </source>
</reference>
<gene>
    <name evidence="5" type="primary">rtt109</name>
    <name evidence="8" type="ORF">CA14_002973</name>
    <name evidence="7" type="ORF">G4B11_009108</name>
</gene>
<sequence>MSKVDVDLGDLLAKVLPTGVKVTIRHISSAPTPCTALFTPPPGEESESTFCENHFLTVSVNADEHDGPEIIVFGIEVLVYSTAHLTTVFVSKADSTGFLHLLKNAPKVSLIRRISNGFLSFLVQTHQRPGVRLVVSLFARAQNQYLFPGSIENSGKHVLDDRGLIKWWCRVVDPILREYEPESGSHEKGLLDRAMESAKSSATAFLIVPGCDKFETRGFFPGTAKSDDKERPRWLNSYPLHQLCDNTDAPPRCLVPRFPDDPKTRFLLDLDDELPQKLEAAGSKEGAGQWRSVKSLDQFWEMMSFRQECSAGRLVGFLWLVINPPGLVNSVQMTSSRPVFKEKAEGSLTTTVPVYDKVDSKPTGTAVSVSTDSQSSDTAKDSTAEATSGGPVQDPSTQTGSLSSETHPKVQPNTDQNAFYWPEAGRGHAVMSEEDYKTAINFLLEQDFYNEKVSIASTKAWSEKVASIVDQLWVGQQVTGRNTSGESADKHAPTTNIINTGLVRKRKKDEPSQATTATSAQKEGCEGNGTVSTAVTAEASTTGTNESPGVNVLQANLIRKKKKA</sequence>
<dbReference type="EC" id="2.3.1.48" evidence="1"/>
<dbReference type="EMBL" id="QQZZ01000104">
    <property type="protein sequence ID" value="RMZ42713.1"/>
    <property type="molecule type" value="Genomic_DNA"/>
</dbReference>
<dbReference type="EMBL" id="CP059863">
    <property type="protein sequence ID" value="QMW45653.1"/>
    <property type="molecule type" value="Genomic_DNA"/>
</dbReference>
<dbReference type="SMR" id="A0A364LXP7"/>
<dbReference type="VEuPathDB" id="FungiDB:AFLA_010071"/>
<dbReference type="VEuPathDB" id="FungiDB:F9C07_11583"/>
<dbReference type="OrthoDB" id="3361892at2759"/>
<dbReference type="Proteomes" id="UP000275480">
    <property type="component" value="Unassembled WGS sequence"/>
</dbReference>
<dbReference type="GO" id="GO:0005634">
    <property type="term" value="C:nucleus"/>
    <property type="evidence" value="ECO:0007669"/>
    <property type="project" value="UniProtKB-SubCell"/>
</dbReference>
<dbReference type="GO" id="GO:0005773">
    <property type="term" value="C:vacuole"/>
    <property type="evidence" value="ECO:0007669"/>
    <property type="project" value="UniProtKB-SubCell"/>
</dbReference>
<dbReference type="GO" id="GO:0032931">
    <property type="term" value="F:histone H3K56 acetyltransferase activity"/>
    <property type="evidence" value="ECO:0007669"/>
    <property type="project" value="TreeGrafter"/>
</dbReference>
<dbReference type="GO" id="GO:0006974">
    <property type="term" value="P:DNA damage response"/>
    <property type="evidence" value="ECO:0007669"/>
    <property type="project" value="UniProtKB-KW"/>
</dbReference>
<dbReference type="GO" id="GO:0006355">
    <property type="term" value="P:regulation of DNA-templated transcription"/>
    <property type="evidence" value="ECO:0007669"/>
    <property type="project" value="InterPro"/>
</dbReference>
<dbReference type="InterPro" id="IPR051236">
    <property type="entry name" value="HAT_RTT109-like"/>
</dbReference>
<dbReference type="InterPro" id="IPR013178">
    <property type="entry name" value="Histone_AcTrfase_Rtt109/CBP"/>
</dbReference>
<dbReference type="InterPro" id="IPR016849">
    <property type="entry name" value="Rtt109"/>
</dbReference>
<dbReference type="PANTHER" id="PTHR31571">
    <property type="entry name" value="ALTERED INHERITANCE OF MITOCHONDRIA PROTEIN 6"/>
    <property type="match status" value="1"/>
</dbReference>
<dbReference type="PANTHER" id="PTHR31571:SF2">
    <property type="entry name" value="HISTONE ACETYLTRANSFERASE RTT109"/>
    <property type="match status" value="1"/>
</dbReference>
<dbReference type="Pfam" id="PF08214">
    <property type="entry name" value="HAT_KAT11"/>
    <property type="match status" value="1"/>
</dbReference>
<dbReference type="SMART" id="SM01250">
    <property type="entry name" value="KAT11"/>
    <property type="match status" value="1"/>
</dbReference>
<dbReference type="PROSITE" id="PS51728">
    <property type="entry name" value="RTT109_HAT"/>
    <property type="match status" value="1"/>
</dbReference>
<feature type="chain" id="PRO_0000453549" description="Histone acetyltransferase rtt109">
    <location>
        <begin position="1"/>
        <end position="564"/>
    </location>
</feature>
<feature type="region of interest" description="Disordered" evidence="3">
    <location>
        <begin position="355"/>
        <end position="420"/>
    </location>
</feature>
<feature type="region of interest" description="Disordered" evidence="3">
    <location>
        <begin position="506"/>
        <end position="549"/>
    </location>
</feature>
<feature type="compositionally biased region" description="Low complexity" evidence="3">
    <location>
        <begin position="366"/>
        <end position="377"/>
    </location>
</feature>
<feature type="compositionally biased region" description="Polar residues" evidence="3">
    <location>
        <begin position="394"/>
        <end position="417"/>
    </location>
</feature>
<feature type="compositionally biased region" description="Polar residues" evidence="3">
    <location>
        <begin position="512"/>
        <end position="521"/>
    </location>
</feature>
<feature type="compositionally biased region" description="Low complexity" evidence="3">
    <location>
        <begin position="529"/>
        <end position="544"/>
    </location>
</feature>
<feature type="active site" description="Proton donor/acceptor" evidence="1">
    <location>
        <position position="261"/>
    </location>
</feature>
<feature type="binding site" evidence="1">
    <location>
        <position position="138"/>
    </location>
    <ligand>
        <name>acetyl-CoA</name>
        <dbReference type="ChEBI" id="CHEBI:57288"/>
    </ligand>
</feature>
<feature type="binding site" evidence="1">
    <location>
        <begin position="157"/>
        <end position="159"/>
    </location>
    <ligand>
        <name>acetyl-CoA</name>
        <dbReference type="ChEBI" id="CHEBI:57288"/>
    </ligand>
</feature>
<feature type="binding site" evidence="1">
    <location>
        <position position="167"/>
    </location>
    <ligand>
        <name>acetyl-CoA</name>
        <dbReference type="ChEBI" id="CHEBI:57288"/>
    </ligand>
</feature>
<feature type="modified residue" description="N6-acetyllysine; by autocatalysis" evidence="1">
    <location>
        <position position="263"/>
    </location>
</feature>
<keyword id="KW-0007">Acetylation</keyword>
<keyword id="KW-0227">DNA damage</keyword>
<keyword id="KW-0539">Nucleus</keyword>
<keyword id="KW-0804">Transcription</keyword>
<keyword id="KW-0805">Transcription regulation</keyword>
<keyword id="KW-0808">Transferase</keyword>
<keyword id="KW-0926">Vacuole</keyword>
<organism>
    <name type="scientific">Aspergillus flavus</name>
    <dbReference type="NCBI Taxonomy" id="5059"/>
    <lineage>
        <taxon>Eukaryota</taxon>
        <taxon>Fungi</taxon>
        <taxon>Dikarya</taxon>
        <taxon>Ascomycota</taxon>
        <taxon>Pezizomycotina</taxon>
        <taxon>Eurotiomycetes</taxon>
        <taxon>Eurotiomycetidae</taxon>
        <taxon>Eurotiales</taxon>
        <taxon>Aspergillaceae</taxon>
        <taxon>Aspergillus</taxon>
        <taxon>Aspergillus subgen. Circumdati</taxon>
    </lineage>
</organism>
<name>RT109_ASPFL</name>
<evidence type="ECO:0000250" key="1">
    <source>
        <dbReference type="UniProtKB" id="Q07794"/>
    </source>
</evidence>
<evidence type="ECO:0000255" key="2">
    <source>
        <dbReference type="PROSITE-ProRule" id="PRU01064"/>
    </source>
</evidence>
<evidence type="ECO:0000256" key="3">
    <source>
        <dbReference type="SAM" id="MobiDB-lite"/>
    </source>
</evidence>
<evidence type="ECO:0000269" key="4">
    <source>
    </source>
</evidence>
<evidence type="ECO:0000303" key="5">
    <source>
    </source>
</evidence>
<evidence type="ECO:0000305" key="6"/>
<evidence type="ECO:0000312" key="7">
    <source>
        <dbReference type="EMBL" id="QMW45653.1"/>
    </source>
</evidence>
<evidence type="ECO:0000312" key="8">
    <source>
        <dbReference type="EMBL" id="RMZ42713.1"/>
    </source>
</evidence>
<proteinExistence type="evidence at protein level"/>
<comment type="function">
    <text evidence="1 4">Histone chaperone-dependent acetylase that modifies 'Lys-56' of histone H3 (H3K56ac) (PubMed:33823938). Histone H3 'Lys-56' acetylation may be required for S-phase-linked DNA damage tolerance (By similarity). Also acetylates 'Lys-9' of histone H3 (H3K9ac) (PubMed:33823938). Autoacetylates (By similarity).</text>
</comment>
<comment type="catalytic activity">
    <reaction evidence="1">
        <text>L-lysyl-[protein] + acetyl-CoA = N(6)-acetyl-L-lysyl-[protein] + CoA + H(+)</text>
        <dbReference type="Rhea" id="RHEA:45948"/>
        <dbReference type="Rhea" id="RHEA-COMP:9752"/>
        <dbReference type="Rhea" id="RHEA-COMP:10731"/>
        <dbReference type="ChEBI" id="CHEBI:15378"/>
        <dbReference type="ChEBI" id="CHEBI:29969"/>
        <dbReference type="ChEBI" id="CHEBI:57287"/>
        <dbReference type="ChEBI" id="CHEBI:57288"/>
        <dbReference type="ChEBI" id="CHEBI:61930"/>
        <dbReference type="EC" id="2.3.1.48"/>
    </reaction>
    <physiologicalReaction direction="left-to-right" evidence="1">
        <dbReference type="Rhea" id="RHEA:45949"/>
    </physiologicalReaction>
</comment>
<comment type="catalytic activity">
    <reaction evidence="1">
        <text>L-lysyl-[histone] + acetyl-CoA = N(6)-acetyl-L-lysyl-[histone] + CoA + H(+)</text>
        <dbReference type="Rhea" id="RHEA:21992"/>
        <dbReference type="Rhea" id="RHEA-COMP:9845"/>
        <dbReference type="Rhea" id="RHEA-COMP:11338"/>
        <dbReference type="ChEBI" id="CHEBI:15378"/>
        <dbReference type="ChEBI" id="CHEBI:29969"/>
        <dbReference type="ChEBI" id="CHEBI:57287"/>
        <dbReference type="ChEBI" id="CHEBI:57288"/>
        <dbReference type="ChEBI" id="CHEBI:61930"/>
        <dbReference type="EC" id="2.3.1.48"/>
    </reaction>
    <physiologicalReaction direction="left-to-right" evidence="1">
        <dbReference type="Rhea" id="RHEA:21993"/>
    </physiologicalReaction>
</comment>
<comment type="subcellular location">
    <subcellularLocation>
        <location evidence="1">Nucleus</location>
    </subcellularLocation>
    <subcellularLocation>
        <location evidence="4">Vacuole</location>
    </subcellularLocation>
</comment>
<comment type="disruption phenotype">
    <text evidence="4">Severely decreases acetylation of 'Lys-56' and 'Lys-9' of histone H3 (PubMed:33823938). Increases mycelial branching (PubMed:33823938). Severely decreases spore formation and abolishes sclerotia production (PubMed:33823938). Decreases aflatoxin production (PubMed:33823938). Increases sensitivity to sodium chloride (osmotic stress), hydrogen peroxide (oxidative stress), methyl methane sulfonate (genotoxic stress), and Congo Red (cell wall stress) (PubMed:33823938). Decreases cell population growth rate (PubMed:33823938). Decreases virulence on maize seed (PubMed:33823938).</text>
</comment>
<comment type="similarity">
    <text evidence="2">Belongs to the RTT109 family.</text>
</comment>